<reference key="1">
    <citation type="submission" date="2006-12" db="EMBL/GenBank/DDBJ databases">
        <title>Complete sequence of Shewanella amazonensis SB2B.</title>
        <authorList>
            <consortium name="US DOE Joint Genome Institute"/>
            <person name="Copeland A."/>
            <person name="Lucas S."/>
            <person name="Lapidus A."/>
            <person name="Barry K."/>
            <person name="Detter J.C."/>
            <person name="Glavina del Rio T."/>
            <person name="Hammon N."/>
            <person name="Israni S."/>
            <person name="Dalin E."/>
            <person name="Tice H."/>
            <person name="Pitluck S."/>
            <person name="Munk A.C."/>
            <person name="Brettin T."/>
            <person name="Bruce D."/>
            <person name="Han C."/>
            <person name="Tapia R."/>
            <person name="Gilna P."/>
            <person name="Schmutz J."/>
            <person name="Larimer F."/>
            <person name="Land M."/>
            <person name="Hauser L."/>
            <person name="Kyrpides N."/>
            <person name="Mikhailova N."/>
            <person name="Fredrickson J."/>
            <person name="Richardson P."/>
        </authorList>
    </citation>
    <scope>NUCLEOTIDE SEQUENCE [LARGE SCALE GENOMIC DNA]</scope>
    <source>
        <strain>ATCC BAA-1098 / SB2B</strain>
    </source>
</reference>
<keyword id="KW-0997">Cell inner membrane</keyword>
<keyword id="KW-1003">Cell membrane</keyword>
<keyword id="KW-0143">Chaperone</keyword>
<keyword id="KW-0472">Membrane</keyword>
<keyword id="KW-0653">Protein transport</keyword>
<keyword id="KW-1185">Reference proteome</keyword>
<keyword id="KW-0812">Transmembrane</keyword>
<keyword id="KW-1133">Transmembrane helix</keyword>
<keyword id="KW-0813">Transport</keyword>
<feature type="chain" id="PRO_1000070165" description="Membrane protein insertase YidC">
    <location>
        <begin position="1"/>
        <end position="541"/>
    </location>
</feature>
<feature type="transmembrane region" description="Helical" evidence="1">
    <location>
        <begin position="6"/>
        <end position="26"/>
    </location>
</feature>
<feature type="transmembrane region" description="Helical" evidence="1">
    <location>
        <begin position="326"/>
        <end position="346"/>
    </location>
</feature>
<feature type="transmembrane region" description="Helical" evidence="1">
    <location>
        <begin position="349"/>
        <end position="369"/>
    </location>
</feature>
<feature type="transmembrane region" description="Helical" evidence="1">
    <location>
        <begin position="420"/>
        <end position="440"/>
    </location>
</feature>
<feature type="transmembrane region" description="Helical" evidence="1">
    <location>
        <begin position="457"/>
        <end position="477"/>
    </location>
</feature>
<feature type="transmembrane region" description="Helical" evidence="1">
    <location>
        <begin position="500"/>
        <end position="520"/>
    </location>
</feature>
<dbReference type="EMBL" id="CP000507">
    <property type="protein sequence ID" value="ABL98221.1"/>
    <property type="molecule type" value="Genomic_DNA"/>
</dbReference>
<dbReference type="RefSeq" id="WP_011758132.1">
    <property type="nucleotide sequence ID" value="NC_008700.1"/>
</dbReference>
<dbReference type="SMR" id="A1S1G5"/>
<dbReference type="STRING" id="326297.Sama_0009"/>
<dbReference type="KEGG" id="saz:Sama_0009"/>
<dbReference type="eggNOG" id="COG0706">
    <property type="taxonomic scope" value="Bacteria"/>
</dbReference>
<dbReference type="HOGENOM" id="CLU_016535_3_0_6"/>
<dbReference type="OrthoDB" id="9780552at2"/>
<dbReference type="Proteomes" id="UP000009175">
    <property type="component" value="Chromosome"/>
</dbReference>
<dbReference type="GO" id="GO:0005886">
    <property type="term" value="C:plasma membrane"/>
    <property type="evidence" value="ECO:0007669"/>
    <property type="project" value="UniProtKB-SubCell"/>
</dbReference>
<dbReference type="GO" id="GO:0032977">
    <property type="term" value="F:membrane insertase activity"/>
    <property type="evidence" value="ECO:0007669"/>
    <property type="project" value="InterPro"/>
</dbReference>
<dbReference type="GO" id="GO:0051205">
    <property type="term" value="P:protein insertion into membrane"/>
    <property type="evidence" value="ECO:0007669"/>
    <property type="project" value="TreeGrafter"/>
</dbReference>
<dbReference type="GO" id="GO:0015031">
    <property type="term" value="P:protein transport"/>
    <property type="evidence" value="ECO:0007669"/>
    <property type="project" value="UniProtKB-KW"/>
</dbReference>
<dbReference type="CDD" id="cd20070">
    <property type="entry name" value="5TM_YidC_Alb3"/>
    <property type="match status" value="1"/>
</dbReference>
<dbReference type="CDD" id="cd19961">
    <property type="entry name" value="EcYidC-like_peri"/>
    <property type="match status" value="1"/>
</dbReference>
<dbReference type="Gene3D" id="2.70.98.90">
    <property type="match status" value="1"/>
</dbReference>
<dbReference type="HAMAP" id="MF_01810">
    <property type="entry name" value="YidC_type1"/>
    <property type="match status" value="1"/>
</dbReference>
<dbReference type="InterPro" id="IPR019998">
    <property type="entry name" value="Membr_insert_YidC"/>
</dbReference>
<dbReference type="InterPro" id="IPR028053">
    <property type="entry name" value="Membr_insert_YidC_N"/>
</dbReference>
<dbReference type="InterPro" id="IPR001708">
    <property type="entry name" value="YidC/ALB3/OXA1/COX18"/>
</dbReference>
<dbReference type="InterPro" id="IPR028055">
    <property type="entry name" value="YidC/Oxa/ALB_C"/>
</dbReference>
<dbReference type="InterPro" id="IPR047196">
    <property type="entry name" value="YidC_ALB_C"/>
</dbReference>
<dbReference type="InterPro" id="IPR038221">
    <property type="entry name" value="YidC_periplasmic_sf"/>
</dbReference>
<dbReference type="NCBIfam" id="NF002351">
    <property type="entry name" value="PRK01318.1-1"/>
    <property type="match status" value="1"/>
</dbReference>
<dbReference type="NCBIfam" id="NF002352">
    <property type="entry name" value="PRK01318.1-3"/>
    <property type="match status" value="1"/>
</dbReference>
<dbReference type="NCBIfam" id="TIGR03593">
    <property type="entry name" value="yidC_nterm"/>
    <property type="match status" value="1"/>
</dbReference>
<dbReference type="NCBIfam" id="TIGR03592">
    <property type="entry name" value="yidC_oxa1_cterm"/>
    <property type="match status" value="1"/>
</dbReference>
<dbReference type="PANTHER" id="PTHR12428:SF65">
    <property type="entry name" value="CYTOCHROME C OXIDASE ASSEMBLY PROTEIN COX18, MITOCHONDRIAL"/>
    <property type="match status" value="1"/>
</dbReference>
<dbReference type="PANTHER" id="PTHR12428">
    <property type="entry name" value="OXA1"/>
    <property type="match status" value="1"/>
</dbReference>
<dbReference type="Pfam" id="PF02096">
    <property type="entry name" value="60KD_IMP"/>
    <property type="match status" value="1"/>
</dbReference>
<dbReference type="Pfam" id="PF14849">
    <property type="entry name" value="YidC_periplas"/>
    <property type="match status" value="1"/>
</dbReference>
<dbReference type="PRINTS" id="PR00701">
    <property type="entry name" value="60KDINNERMP"/>
</dbReference>
<dbReference type="PRINTS" id="PR01900">
    <property type="entry name" value="YIDCPROTEIN"/>
</dbReference>
<protein>
    <recommendedName>
        <fullName evidence="1">Membrane protein insertase YidC</fullName>
    </recommendedName>
    <alternativeName>
        <fullName evidence="1">Foldase YidC</fullName>
    </alternativeName>
    <alternativeName>
        <fullName evidence="1">Membrane integrase YidC</fullName>
    </alternativeName>
    <alternativeName>
        <fullName evidence="1">Membrane protein YidC</fullName>
    </alternativeName>
</protein>
<accession>A1S1G5</accession>
<evidence type="ECO:0000255" key="1">
    <source>
        <dbReference type="HAMAP-Rule" id="MF_01810"/>
    </source>
</evidence>
<organism>
    <name type="scientific">Shewanella amazonensis (strain ATCC BAA-1098 / SB2B)</name>
    <dbReference type="NCBI Taxonomy" id="326297"/>
    <lineage>
        <taxon>Bacteria</taxon>
        <taxon>Pseudomonadati</taxon>
        <taxon>Pseudomonadota</taxon>
        <taxon>Gammaproteobacteria</taxon>
        <taxon>Alteromonadales</taxon>
        <taxon>Shewanellaceae</taxon>
        <taxon>Shewanella</taxon>
    </lineage>
</organism>
<gene>
    <name evidence="1" type="primary">yidC</name>
    <name type="ordered locus">Sama_0009</name>
</gene>
<name>YIDC_SHEAM</name>
<comment type="function">
    <text evidence="1">Required for the insertion and/or proper folding and/or complex formation of integral membrane proteins into the membrane. Involved in integration of membrane proteins that insert both dependently and independently of the Sec translocase complex, as well as at least some lipoproteins. Aids folding of multispanning membrane proteins.</text>
</comment>
<comment type="subunit">
    <text evidence="1">Interacts with the Sec translocase complex via SecD. Specifically interacts with transmembrane segments of nascent integral membrane proteins during membrane integration.</text>
</comment>
<comment type="subcellular location">
    <subcellularLocation>
        <location evidence="1">Cell inner membrane</location>
        <topology evidence="1">Multi-pass membrane protein</topology>
    </subcellularLocation>
</comment>
<comment type="similarity">
    <text evidence="1">Belongs to the OXA1/ALB3/YidC family. Type 1 subfamily.</text>
</comment>
<sequence length="541" mass="60037">MESQRNLLLIGLLFVSFLLWQQWESDKAPKPATEVTAAAQIHDQAINSDVPTADAGVPATVAATQNLILVTTDQLEIQINPVGGDIVHAALLTHKLEQNEEAPFVLLEQKNNFSYIAQSGLIGRDGIDSAASGRAKFAAAADAYTLADGQDTLEVPLTLTTDAGVTFTKVFVFKRGQFDVGVDYRVANNSAAPVQVQMYGQIKQTITASESSMMMPTYRGAAFSTADVRYEKYSFDDMGKKDLEEPTLGGWVAMLQHYFVSAWVPAAADKNTLFTSVSAGGLANIGFKGSVHDVAPGATETISATFYVGPKDQAALSALSDTLNLVVDYGFLWWLAVPIHWILMFFQSLVHNWGVAIILVTLTVRGLLYPLTKAQYVSMAKMRNLQPKLQDLKDRFGDDRQKMGQAMMELYKKEKVNPMGGCLPILLQMPIFIALYWVLLESVELRHAPFMLWIQDLSVQDPYYVLPLLMGASMWAMQKMQPMAPNMDPMQQKMLQWMPMIFTVFFLWFPAGLVLYWLVGNLVAITQQKIIYASLEKKGLK</sequence>
<proteinExistence type="inferred from homology"/>